<sequence>MLEKYKNSKKLSRDLPQINDRIKFPKVRVIDDEGEQLGIFAPEAAIQLATKQGLDLVLVSDKSDPPVCRILDYGKYKFTQEKRAREAKKKQHNSSIKEVKMRYKIEEHDYKVRINQASKFLQSGDKVKATITFRGREIQHSNLAINLLNKMAADLVTIAEIQQAPSRDGRNVIMLLSPKKVN</sequence>
<dbReference type="EMBL" id="U38804">
    <property type="protein sequence ID" value="AAC08117.1"/>
    <property type="molecule type" value="Genomic_DNA"/>
</dbReference>
<dbReference type="PIR" id="S73152">
    <property type="entry name" value="S73152"/>
</dbReference>
<dbReference type="RefSeq" id="NP_053841.1">
    <property type="nucleotide sequence ID" value="NC_000925.1"/>
</dbReference>
<dbReference type="SMR" id="P51231"/>
<dbReference type="GeneID" id="809859"/>
<dbReference type="GO" id="GO:0009507">
    <property type="term" value="C:chloroplast"/>
    <property type="evidence" value="ECO:0007669"/>
    <property type="project" value="UniProtKB-SubCell"/>
</dbReference>
<dbReference type="GO" id="GO:0005829">
    <property type="term" value="C:cytosol"/>
    <property type="evidence" value="ECO:0007669"/>
    <property type="project" value="TreeGrafter"/>
</dbReference>
<dbReference type="GO" id="GO:0016020">
    <property type="term" value="C:membrane"/>
    <property type="evidence" value="ECO:0007669"/>
    <property type="project" value="TreeGrafter"/>
</dbReference>
<dbReference type="GO" id="GO:0043022">
    <property type="term" value="F:ribosome binding"/>
    <property type="evidence" value="ECO:0007669"/>
    <property type="project" value="TreeGrafter"/>
</dbReference>
<dbReference type="GO" id="GO:0003743">
    <property type="term" value="F:translation initiation factor activity"/>
    <property type="evidence" value="ECO:0007669"/>
    <property type="project" value="UniProtKB-UniRule"/>
</dbReference>
<dbReference type="GO" id="GO:0032790">
    <property type="term" value="P:ribosome disassembly"/>
    <property type="evidence" value="ECO:0007669"/>
    <property type="project" value="TreeGrafter"/>
</dbReference>
<dbReference type="FunFam" id="3.30.110.10:FF:000001">
    <property type="entry name" value="Translation initiation factor IF-3"/>
    <property type="match status" value="1"/>
</dbReference>
<dbReference type="Gene3D" id="3.30.110.10">
    <property type="entry name" value="Translation initiation factor 3 (IF-3), C-terminal domain"/>
    <property type="match status" value="1"/>
</dbReference>
<dbReference type="Gene3D" id="3.10.20.80">
    <property type="entry name" value="Translation initiation factor 3 (IF-3), N-terminal domain"/>
    <property type="match status" value="1"/>
</dbReference>
<dbReference type="HAMAP" id="MF_00080">
    <property type="entry name" value="IF_3"/>
    <property type="match status" value="1"/>
</dbReference>
<dbReference type="InterPro" id="IPR036788">
    <property type="entry name" value="T_IF-3_C_sf"/>
</dbReference>
<dbReference type="InterPro" id="IPR036787">
    <property type="entry name" value="T_IF-3_N_sf"/>
</dbReference>
<dbReference type="InterPro" id="IPR019813">
    <property type="entry name" value="Translation_initiation_fac3_CS"/>
</dbReference>
<dbReference type="InterPro" id="IPR001288">
    <property type="entry name" value="Translation_initiation_fac_3"/>
</dbReference>
<dbReference type="InterPro" id="IPR019815">
    <property type="entry name" value="Translation_initiation_fac_3_C"/>
</dbReference>
<dbReference type="InterPro" id="IPR019814">
    <property type="entry name" value="Translation_initiation_fac_3_N"/>
</dbReference>
<dbReference type="NCBIfam" id="TIGR00168">
    <property type="entry name" value="infC"/>
    <property type="match status" value="1"/>
</dbReference>
<dbReference type="PANTHER" id="PTHR10938">
    <property type="entry name" value="TRANSLATION INITIATION FACTOR IF-3"/>
    <property type="match status" value="1"/>
</dbReference>
<dbReference type="PANTHER" id="PTHR10938:SF0">
    <property type="entry name" value="TRANSLATION INITIATION FACTOR IF-3, MITOCHONDRIAL"/>
    <property type="match status" value="1"/>
</dbReference>
<dbReference type="Pfam" id="PF00707">
    <property type="entry name" value="IF3_C"/>
    <property type="match status" value="1"/>
</dbReference>
<dbReference type="Pfam" id="PF05198">
    <property type="entry name" value="IF3_N"/>
    <property type="match status" value="1"/>
</dbReference>
<dbReference type="SUPFAM" id="SSF55200">
    <property type="entry name" value="Translation initiation factor IF3, C-terminal domain"/>
    <property type="match status" value="1"/>
</dbReference>
<dbReference type="SUPFAM" id="SSF54364">
    <property type="entry name" value="Translation initiation factor IF3, N-terminal domain"/>
    <property type="match status" value="1"/>
</dbReference>
<dbReference type="PROSITE" id="PS00938">
    <property type="entry name" value="IF3"/>
    <property type="match status" value="1"/>
</dbReference>
<accession>P51231</accession>
<geneLocation type="chloroplast"/>
<comment type="function">
    <text evidence="1">IF-3 binds to the 30S ribosomal subunit and shifts the equilibrium between 70S ribosomes and their 50S and 30S subunits in favor of the free subunits, thus enhancing the availability of 30S subunits on which protein synthesis initiation begins.</text>
</comment>
<comment type="subunit">
    <text evidence="1">Monomer.</text>
</comment>
<comment type="subcellular location">
    <subcellularLocation>
        <location>Plastid</location>
        <location>Chloroplast</location>
    </subcellularLocation>
</comment>
<comment type="similarity">
    <text evidence="1">Belongs to the IF-3 family.</text>
</comment>
<proteinExistence type="inferred from homology"/>
<evidence type="ECO:0000255" key="1">
    <source>
        <dbReference type="HAMAP-Rule" id="MF_00080"/>
    </source>
</evidence>
<protein>
    <recommendedName>
        <fullName evidence="1">Translation initiation factor IF-3, chloroplastic</fullName>
    </recommendedName>
</protein>
<organism>
    <name type="scientific">Porphyra purpurea</name>
    <name type="common">Red seaweed</name>
    <name type="synonym">Ulva purpurea</name>
    <dbReference type="NCBI Taxonomy" id="2787"/>
    <lineage>
        <taxon>Eukaryota</taxon>
        <taxon>Rhodophyta</taxon>
        <taxon>Bangiophyceae</taxon>
        <taxon>Bangiales</taxon>
        <taxon>Bangiaceae</taxon>
        <taxon>Porphyra</taxon>
    </lineage>
</organism>
<name>IF3C_PORPU</name>
<reference key="1">
    <citation type="journal article" date="1995" name="Plant Mol. Biol. Rep.">
        <title>Complete nucleotide sequence of the Porphyra purpurea chloroplast genome.</title>
        <authorList>
            <person name="Reith M.E."/>
            <person name="Munholland J."/>
        </authorList>
    </citation>
    <scope>NUCLEOTIDE SEQUENCE [LARGE SCALE GENOMIC DNA]</scope>
    <source>
        <strain>Avonport</strain>
    </source>
</reference>
<keyword id="KW-0150">Chloroplast</keyword>
<keyword id="KW-0396">Initiation factor</keyword>
<keyword id="KW-0934">Plastid</keyword>
<keyword id="KW-0648">Protein biosynthesis</keyword>
<feature type="chain" id="PRO_0000177618" description="Translation initiation factor IF-3, chloroplastic">
    <location>
        <begin position="1"/>
        <end position="182"/>
    </location>
</feature>
<gene>
    <name evidence="1" type="primary">infC</name>
</gene>